<organism>
    <name type="scientific">Bifidobacterium longum (strain NCC 2705)</name>
    <dbReference type="NCBI Taxonomy" id="206672"/>
    <lineage>
        <taxon>Bacteria</taxon>
        <taxon>Bacillati</taxon>
        <taxon>Actinomycetota</taxon>
        <taxon>Actinomycetes</taxon>
        <taxon>Bifidobacteriales</taxon>
        <taxon>Bifidobacteriaceae</taxon>
        <taxon>Bifidobacterium</taxon>
    </lineage>
</organism>
<dbReference type="EC" id="2.5.1.-" evidence="1"/>
<dbReference type="EMBL" id="AE014295">
    <property type="protein sequence ID" value="AAN23966.1"/>
    <property type="molecule type" value="Genomic_DNA"/>
</dbReference>
<dbReference type="RefSeq" id="NP_695330.1">
    <property type="nucleotide sequence ID" value="NC_004307.2"/>
</dbReference>
<dbReference type="SMR" id="Q8G7Y3"/>
<dbReference type="STRING" id="206672.BL0101"/>
<dbReference type="EnsemblBacteria" id="AAN23966">
    <property type="protein sequence ID" value="AAN23966"/>
    <property type="gene ID" value="BL0101"/>
</dbReference>
<dbReference type="KEGG" id="blo:BL0101"/>
<dbReference type="PATRIC" id="fig|206672.9.peg.108"/>
<dbReference type="HOGENOM" id="CLU_038505_1_2_11"/>
<dbReference type="OrthoDB" id="4191603at2"/>
<dbReference type="PhylomeDB" id="Q8G7Y3"/>
<dbReference type="Proteomes" id="UP000000439">
    <property type="component" value="Chromosome"/>
</dbReference>
<dbReference type="GO" id="GO:0005829">
    <property type="term" value="C:cytosol"/>
    <property type="evidence" value="ECO:0007669"/>
    <property type="project" value="TreeGrafter"/>
</dbReference>
<dbReference type="GO" id="GO:0005886">
    <property type="term" value="C:plasma membrane"/>
    <property type="evidence" value="ECO:0007669"/>
    <property type="project" value="TreeGrafter"/>
</dbReference>
<dbReference type="GO" id="GO:0008834">
    <property type="term" value="F:ditrans,polycis-undecaprenyl-diphosphate synthase [(2E,6E)-farnesyl-diphosphate specific] activity"/>
    <property type="evidence" value="ECO:0007669"/>
    <property type="project" value="TreeGrafter"/>
</dbReference>
<dbReference type="GO" id="GO:0000287">
    <property type="term" value="F:magnesium ion binding"/>
    <property type="evidence" value="ECO:0007669"/>
    <property type="project" value="UniProtKB-UniRule"/>
</dbReference>
<dbReference type="GO" id="GO:0030145">
    <property type="term" value="F:manganese ion binding"/>
    <property type="evidence" value="ECO:0007669"/>
    <property type="project" value="TreeGrafter"/>
</dbReference>
<dbReference type="GO" id="GO:0033850">
    <property type="term" value="F:Z-farnesyl diphosphate synthase activity"/>
    <property type="evidence" value="ECO:0007669"/>
    <property type="project" value="TreeGrafter"/>
</dbReference>
<dbReference type="GO" id="GO:0016094">
    <property type="term" value="P:polyprenol biosynthetic process"/>
    <property type="evidence" value="ECO:0007669"/>
    <property type="project" value="TreeGrafter"/>
</dbReference>
<dbReference type="CDD" id="cd00475">
    <property type="entry name" value="Cis_IPPS"/>
    <property type="match status" value="1"/>
</dbReference>
<dbReference type="Gene3D" id="3.40.1180.10">
    <property type="entry name" value="Decaprenyl diphosphate synthase-like"/>
    <property type="match status" value="1"/>
</dbReference>
<dbReference type="HAMAP" id="MF_01139">
    <property type="entry name" value="ISPT"/>
    <property type="match status" value="1"/>
</dbReference>
<dbReference type="InterPro" id="IPR001441">
    <property type="entry name" value="UPP_synth-like"/>
</dbReference>
<dbReference type="InterPro" id="IPR018520">
    <property type="entry name" value="UPP_synth-like_CS"/>
</dbReference>
<dbReference type="InterPro" id="IPR036424">
    <property type="entry name" value="UPP_synth-like_sf"/>
</dbReference>
<dbReference type="NCBIfam" id="NF011404">
    <property type="entry name" value="PRK14829.1"/>
    <property type="match status" value="1"/>
</dbReference>
<dbReference type="NCBIfam" id="TIGR00055">
    <property type="entry name" value="uppS"/>
    <property type="match status" value="1"/>
</dbReference>
<dbReference type="PANTHER" id="PTHR10291:SF0">
    <property type="entry name" value="DEHYDRODOLICHYL DIPHOSPHATE SYNTHASE 2"/>
    <property type="match status" value="1"/>
</dbReference>
<dbReference type="PANTHER" id="PTHR10291">
    <property type="entry name" value="DEHYDRODOLICHYL DIPHOSPHATE SYNTHASE FAMILY MEMBER"/>
    <property type="match status" value="1"/>
</dbReference>
<dbReference type="Pfam" id="PF01255">
    <property type="entry name" value="Prenyltransf"/>
    <property type="match status" value="1"/>
</dbReference>
<dbReference type="SUPFAM" id="SSF64005">
    <property type="entry name" value="Undecaprenyl diphosphate synthase"/>
    <property type="match status" value="1"/>
</dbReference>
<dbReference type="PROSITE" id="PS01066">
    <property type="entry name" value="UPP_SYNTHASE"/>
    <property type="match status" value="1"/>
</dbReference>
<keyword id="KW-0460">Magnesium</keyword>
<keyword id="KW-0479">Metal-binding</keyword>
<keyword id="KW-1185">Reference proteome</keyword>
<keyword id="KW-0808">Transferase</keyword>
<sequence length="264" mass="30244">MSMAFENVDYTSLDIPAAPFSDPARIPDFPKNKVPRHIGVIMDGNGRWAKQRGMVRTNGHQAAEPVVFDTIAGAIEAGVRYLSLYTFSTENWKRSPQEVRFLMGFSREIIHRRVEQMDEWGVRVRWSGRRPKLWKSVIDELEAAEERTKNNKVIDVVFCINYGGRAEIADACAAIAREVRDGKISGDRVTEKMIADHLYNPDIPDCDLVIRTSGEQRTSNFLPWEAAYAELDFVPELFPDCGRDVLWRSIDHYIHRDRRFGGVK</sequence>
<name>ISPT_BIFLO</name>
<feature type="chain" id="PRO_0000123574" description="Isoprenyl transferase">
    <location>
        <begin position="1"/>
        <end position="264"/>
    </location>
</feature>
<feature type="active site" evidence="1">
    <location>
        <position position="43"/>
    </location>
</feature>
<feature type="active site" description="Proton acceptor" evidence="1">
    <location>
        <position position="91"/>
    </location>
</feature>
<feature type="binding site" evidence="1">
    <location>
        <position position="43"/>
    </location>
    <ligand>
        <name>Mg(2+)</name>
        <dbReference type="ChEBI" id="CHEBI:18420"/>
    </ligand>
</feature>
<feature type="binding site" evidence="1">
    <location>
        <begin position="44"/>
        <end position="47"/>
    </location>
    <ligand>
        <name>substrate</name>
    </ligand>
</feature>
<feature type="binding site" evidence="1">
    <location>
        <position position="48"/>
    </location>
    <ligand>
        <name>substrate</name>
    </ligand>
</feature>
<feature type="binding site" evidence="1">
    <location>
        <position position="56"/>
    </location>
    <ligand>
        <name>substrate</name>
    </ligand>
</feature>
<feature type="binding site" evidence="1">
    <location>
        <position position="60"/>
    </location>
    <ligand>
        <name>substrate</name>
    </ligand>
</feature>
<feature type="binding site" evidence="1">
    <location>
        <begin position="88"/>
        <end position="90"/>
    </location>
    <ligand>
        <name>substrate</name>
    </ligand>
</feature>
<feature type="binding site" evidence="1">
    <location>
        <position position="92"/>
    </location>
    <ligand>
        <name>substrate</name>
    </ligand>
</feature>
<feature type="binding site" evidence="1">
    <location>
        <position position="94"/>
    </location>
    <ligand>
        <name>substrate</name>
    </ligand>
</feature>
<feature type="binding site" evidence="1">
    <location>
        <position position="211"/>
    </location>
    <ligand>
        <name>substrate</name>
    </ligand>
</feature>
<feature type="binding site" evidence="1">
    <location>
        <begin position="217"/>
        <end position="219"/>
    </location>
    <ligand>
        <name>substrate</name>
    </ligand>
</feature>
<feature type="binding site" evidence="1">
    <location>
        <position position="230"/>
    </location>
    <ligand>
        <name>Mg(2+)</name>
        <dbReference type="ChEBI" id="CHEBI:18420"/>
    </ligand>
</feature>
<accession>Q8G7Y3</accession>
<gene>
    <name evidence="1" type="primary">uppS</name>
    <name type="ordered locus">BL0101</name>
</gene>
<comment type="function">
    <text evidence="1">Catalyzes the condensation of isopentenyl diphosphate (IPP) with allylic pyrophosphates generating different type of terpenoids.</text>
</comment>
<comment type="cofactor">
    <cofactor evidence="1">
        <name>Mg(2+)</name>
        <dbReference type="ChEBI" id="CHEBI:18420"/>
    </cofactor>
    <text evidence="1">Binds 2 magnesium ions per subunit.</text>
</comment>
<comment type="subunit">
    <text evidence="1">Homodimer.</text>
</comment>
<comment type="similarity">
    <text evidence="1">Belongs to the UPP synthase family.</text>
</comment>
<protein>
    <recommendedName>
        <fullName evidence="1">Isoprenyl transferase</fullName>
        <ecNumber evidence="1">2.5.1.-</ecNumber>
    </recommendedName>
</protein>
<evidence type="ECO:0000255" key="1">
    <source>
        <dbReference type="HAMAP-Rule" id="MF_01139"/>
    </source>
</evidence>
<reference key="1">
    <citation type="journal article" date="2002" name="Proc. Natl. Acad. Sci. U.S.A.">
        <title>The genome sequence of Bifidobacterium longum reflects its adaptation to the human gastrointestinal tract.</title>
        <authorList>
            <person name="Schell M.A."/>
            <person name="Karmirantzou M."/>
            <person name="Snel B."/>
            <person name="Vilanova D."/>
            <person name="Berger B."/>
            <person name="Pessi G."/>
            <person name="Zwahlen M.-C."/>
            <person name="Desiere F."/>
            <person name="Bork P."/>
            <person name="Delley M."/>
            <person name="Pridmore R.D."/>
            <person name="Arigoni F."/>
        </authorList>
    </citation>
    <scope>NUCLEOTIDE SEQUENCE [LARGE SCALE GENOMIC DNA]</scope>
    <source>
        <strain>NCC 2705</strain>
    </source>
</reference>
<proteinExistence type="inferred from homology"/>